<feature type="chain" id="PRO_0000455423" description="Phospholipase A2 crotoxin basic subunit CBd">
    <location>
        <begin position="1" status="less than"/>
        <end position="122"/>
    </location>
</feature>
<feature type="active site" evidence="1">
    <location>
        <position position="47"/>
    </location>
</feature>
<feature type="active site" evidence="1">
    <location>
        <position position="89"/>
    </location>
</feature>
<feature type="binding site" evidence="1">
    <location>
        <position position="27"/>
    </location>
    <ligand>
        <name>Ca(2+)</name>
        <dbReference type="ChEBI" id="CHEBI:29108"/>
    </ligand>
</feature>
<feature type="binding site" evidence="1">
    <location>
        <position position="29"/>
    </location>
    <ligand>
        <name>Ca(2+)</name>
        <dbReference type="ChEBI" id="CHEBI:29108"/>
    </ligand>
</feature>
<feature type="binding site" evidence="1">
    <location>
        <position position="31"/>
    </location>
    <ligand>
        <name>Ca(2+)</name>
        <dbReference type="ChEBI" id="CHEBI:29108"/>
    </ligand>
</feature>
<feature type="binding site" evidence="1">
    <location>
        <position position="48"/>
    </location>
    <ligand>
        <name>Ca(2+)</name>
        <dbReference type="ChEBI" id="CHEBI:29108"/>
    </ligand>
</feature>
<feature type="site" description="Responsible for the weak stability and toxicity" evidence="1">
    <location>
        <position position="1"/>
    </location>
</feature>
<feature type="site" description="Putative interfacial binding surface (IBS)" evidence="1">
    <location>
        <position position="2"/>
    </location>
</feature>
<feature type="site" description="Putative interfacial binding surface (IBS)" evidence="1">
    <location>
        <position position="3"/>
    </location>
</feature>
<feature type="site" description="Putative interfacial binding surface (IBS)" evidence="1">
    <location>
        <position position="7"/>
    </location>
</feature>
<feature type="site" description="Putative interfacial binding surface (IBS)" evidence="1">
    <location>
        <position position="10"/>
    </location>
</feature>
<feature type="site" description="Putative interfacial binding surface (IBS)" evidence="1">
    <location>
        <position position="17"/>
    </location>
</feature>
<feature type="site" description="Putative interfacial binding surface (IBS)" evidence="1">
    <location>
        <position position="22"/>
    </location>
</feature>
<feature type="site" description="Putative interfacial binding surface (IBS)" evidence="1">
    <location>
        <position position="23"/>
    </location>
</feature>
<feature type="site" description="Putative interfacial binding surface (IBS)" evidence="1">
    <location>
        <position position="60"/>
    </location>
</feature>
<feature type="site" description="Putative interfacial binding surface (IBS)" evidence="1">
    <location>
        <position position="103"/>
    </location>
</feature>
<feature type="site" description="Responsible for the higher anticoagulant activity (compared with CBa2)" evidence="1">
    <location>
        <position position="117"/>
    </location>
</feature>
<feature type="disulfide bond" evidence="12">
    <location>
        <begin position="26"/>
        <end position="115"/>
    </location>
</feature>
<feature type="disulfide bond" evidence="12">
    <location>
        <begin position="28"/>
        <end position="44"/>
    </location>
</feature>
<feature type="disulfide bond" evidence="12">
    <location>
        <begin position="43"/>
        <end position="95"/>
    </location>
</feature>
<feature type="disulfide bond" evidence="12">
    <location>
        <begin position="49"/>
        <end position="122"/>
    </location>
</feature>
<feature type="disulfide bond" evidence="12">
    <location>
        <begin position="50"/>
        <end position="88"/>
    </location>
</feature>
<feature type="disulfide bond" evidence="12">
    <location>
        <begin position="57"/>
        <end position="81"/>
    </location>
</feature>
<feature type="disulfide bond" evidence="12">
    <location>
        <begin position="75"/>
        <end position="86"/>
    </location>
</feature>
<feature type="non-terminal residue" evidence="10">
    <location>
        <position position="1"/>
    </location>
</feature>
<feature type="helix" evidence="13">
    <location>
        <begin position="2"/>
        <end position="13"/>
    </location>
</feature>
<feature type="helix" evidence="13">
    <location>
        <begin position="17"/>
        <end position="20"/>
    </location>
</feature>
<feature type="turn" evidence="13">
    <location>
        <begin position="21"/>
        <end position="23"/>
    </location>
</feature>
<feature type="turn" evidence="13">
    <location>
        <begin position="25"/>
        <end position="27"/>
    </location>
</feature>
<feature type="strand" evidence="13">
    <location>
        <begin position="28"/>
        <end position="30"/>
    </location>
</feature>
<feature type="helix" evidence="13">
    <location>
        <begin position="39"/>
        <end position="52"/>
    </location>
</feature>
<feature type="turn" evidence="13">
    <location>
        <begin position="53"/>
        <end position="56"/>
    </location>
</feature>
<feature type="turn" evidence="13">
    <location>
        <begin position="59"/>
        <end position="61"/>
    </location>
</feature>
<feature type="helix" evidence="13">
    <location>
        <begin position="80"/>
        <end position="98"/>
    </location>
</feature>
<feature type="helix" evidence="13">
    <location>
        <begin position="100"/>
        <end position="102"/>
    </location>
</feature>
<feature type="helix" evidence="13">
    <location>
        <begin position="105"/>
        <end position="107"/>
    </location>
</feature>
<feature type="helix" evidence="13">
    <location>
        <begin position="112"/>
        <end position="114"/>
    </location>
</feature>
<reference evidence="10" key="1">
    <citation type="journal article" date="1986" name="Arch. Biochem. Biophys.">
        <title>A complete amino acid sequence for the basic subunit of crotoxin.</title>
        <authorList>
            <person name="Aird S.D."/>
            <person name="Kaiser I.I."/>
            <person name="Lewis R.V."/>
            <person name="Kruggel W.G."/>
        </authorList>
    </citation>
    <scope>PROTEIN SEQUENCE</scope>
    <scope>SUBCELLULAR LOCATION</scope>
    <scope>TISSUE SPECIFICITY</scope>
</reference>
<reference evidence="10" key="2">
    <citation type="journal article" date="1993" name="Eur. J. Biochem.">
        <title>Comparison of crotoxin isoforms reveals that stability of the complex plays a major role in its pharmacological action.</title>
        <authorList>
            <person name="Faure G."/>
            <person name="Harvey A.L."/>
            <person name="Thomson E."/>
            <person name="Saliou B."/>
            <person name="Radvanyi F."/>
            <person name="Bon C."/>
        </authorList>
    </citation>
    <scope>FUNCTION</scope>
    <scope>CATALYTIC ACTIVITY</scope>
    <scope>BIOPHYSICOCHEMICAL PROPERTIES</scope>
    <scope>SUBUNIT</scope>
    <scope>TOXIC DOSE</scope>
</reference>
<reference evidence="10" key="3">
    <citation type="journal article" date="1994" name="Eur. J. Biochem.">
        <title>The origin of the diversity of crotoxin isoforms in the venom of Crotalus durissus terrificus.</title>
        <authorList>
            <person name="Faure G."/>
            <person name="Choumet V."/>
            <person name="Bouchier C."/>
            <person name="Camoin L."/>
            <person name="Guillaume J.-L."/>
            <person name="Monegier B."/>
            <person name="Vuilhorgne M."/>
            <person name="Bon C."/>
        </authorList>
    </citation>
    <scope>MASS SPECTROMETRY</scope>
    <scope>SUBCELLULAR LOCATION</scope>
    <source>
        <tissue>Venom</tissue>
    </source>
</reference>
<reference evidence="10" key="4">
    <citation type="journal article" date="2000" name="Eur. J. Biochem.">
        <title>Interaction of the neurotoxic and nontoxic secretory phospholipases A2 with the crotoxin inhibitor from Crotalus serum.</title>
        <authorList>
            <person name="Faure G."/>
            <person name="Villela C."/>
            <person name="Perales J."/>
            <person name="Bon C."/>
        </authorList>
    </citation>
    <scope>INTERACTION WITH CICS</scope>
    <scope>INHIBITION OF CROTOXIN BY CICS</scope>
</reference>
<reference evidence="10" key="5">
    <citation type="journal article" date="2003" name="Toxicon">
        <title>Crotoxin acceptor protein isolated from Torpedo electric organ: binding properties to crotoxin by surface plasmon resonance.</title>
        <authorList>
            <person name="Faure G."/>
            <person name="Copic A."/>
            <person name="Le Porrier S."/>
            <person name="Gubensek F."/>
            <person name="Bon C."/>
            <person name="Krizaj I."/>
        </authorList>
    </citation>
    <scope>FUNCTION</scope>
</reference>
<reference evidence="12" key="6">
    <citation type="journal article" date="2020" name="Molecules">
        <title>Crystal Structure of Isoform CBd of the Basic Phospholipase A2 Subunit of Crotoxin: Description of the Structural Framework of CB for Interaction with Protein Targets.</title>
        <authorList>
            <person name="Nemecz D."/>
            <person name="Ostrowski M."/>
            <person name="Ravatin M."/>
            <person name="Saul F."/>
            <person name="Faure G."/>
        </authorList>
    </citation>
    <scope>X-RAY CRYSTALLOGRAPHY (1.8 ANGSTROMS)</scope>
</reference>
<dbReference type="EC" id="3.1.1.4" evidence="2 3 8"/>
<dbReference type="PDB" id="6TMY">
    <property type="method" value="X-ray"/>
    <property type="resolution" value="1.80 A"/>
    <property type="chains" value="A/B/C/D/E/F=1-122"/>
</dbReference>
<dbReference type="PDBsum" id="6TMY"/>
<dbReference type="SMR" id="C0HM14"/>
<dbReference type="ComplexPortal" id="CPX-7362">
    <property type="entry name" value="Crotoxin complex, aCA1/2/4-bCA1-CBd variant"/>
</dbReference>
<dbReference type="ComplexPortal" id="CPX-7363">
    <property type="entry name" value="Crotoxin complex, aCA3-bCA2/3/4-CBd variant"/>
</dbReference>
<dbReference type="ComplexPortal" id="CPX-7364">
    <property type="entry name" value="Crotoxin complex, aCA3-bCA1-CBd variant"/>
</dbReference>
<dbReference type="ComplexPortal" id="CPX-7365">
    <property type="entry name" value="Crotoxin complex, aCA1/2/4-bCA2/3/4-CBd variant"/>
</dbReference>
<dbReference type="GO" id="GO:0005576">
    <property type="term" value="C:extracellular region"/>
    <property type="evidence" value="ECO:0007669"/>
    <property type="project" value="UniProtKB-SubCell"/>
</dbReference>
<dbReference type="GO" id="GO:0005509">
    <property type="term" value="F:calcium ion binding"/>
    <property type="evidence" value="ECO:0007669"/>
    <property type="project" value="InterPro"/>
</dbReference>
<dbReference type="GO" id="GO:0047498">
    <property type="term" value="F:calcium-dependent phospholipase A2 activity"/>
    <property type="evidence" value="ECO:0007669"/>
    <property type="project" value="TreeGrafter"/>
</dbReference>
<dbReference type="GO" id="GO:0099106">
    <property type="term" value="F:ion channel regulator activity"/>
    <property type="evidence" value="ECO:0007669"/>
    <property type="project" value="UniProtKB-KW"/>
</dbReference>
<dbReference type="GO" id="GO:0005543">
    <property type="term" value="F:phospholipid binding"/>
    <property type="evidence" value="ECO:0007669"/>
    <property type="project" value="TreeGrafter"/>
</dbReference>
<dbReference type="GO" id="GO:0090729">
    <property type="term" value="F:toxin activity"/>
    <property type="evidence" value="ECO:0007669"/>
    <property type="project" value="UniProtKB-KW"/>
</dbReference>
<dbReference type="GO" id="GO:0050482">
    <property type="term" value="P:arachidonate secretion"/>
    <property type="evidence" value="ECO:0007669"/>
    <property type="project" value="InterPro"/>
</dbReference>
<dbReference type="GO" id="GO:0016042">
    <property type="term" value="P:lipid catabolic process"/>
    <property type="evidence" value="ECO:0007669"/>
    <property type="project" value="UniProtKB-KW"/>
</dbReference>
<dbReference type="GO" id="GO:0042130">
    <property type="term" value="P:negative regulation of T cell proliferation"/>
    <property type="evidence" value="ECO:0007669"/>
    <property type="project" value="TreeGrafter"/>
</dbReference>
<dbReference type="GO" id="GO:0006644">
    <property type="term" value="P:phospholipid metabolic process"/>
    <property type="evidence" value="ECO:0007669"/>
    <property type="project" value="InterPro"/>
</dbReference>
<dbReference type="CDD" id="cd00125">
    <property type="entry name" value="PLA2c"/>
    <property type="match status" value="1"/>
</dbReference>
<dbReference type="FunFam" id="1.20.90.10:FF:000001">
    <property type="entry name" value="Basic phospholipase A2 homolog"/>
    <property type="match status" value="1"/>
</dbReference>
<dbReference type="Gene3D" id="1.20.90.10">
    <property type="entry name" value="Phospholipase A2 domain"/>
    <property type="match status" value="1"/>
</dbReference>
<dbReference type="InterPro" id="IPR001211">
    <property type="entry name" value="PLipase_A2"/>
</dbReference>
<dbReference type="InterPro" id="IPR033112">
    <property type="entry name" value="PLipase_A2_Asp_AS"/>
</dbReference>
<dbReference type="InterPro" id="IPR016090">
    <property type="entry name" value="PLipase_A2_dom"/>
</dbReference>
<dbReference type="InterPro" id="IPR036444">
    <property type="entry name" value="PLipase_A2_dom_sf"/>
</dbReference>
<dbReference type="InterPro" id="IPR033113">
    <property type="entry name" value="PLipase_A2_His_AS"/>
</dbReference>
<dbReference type="PANTHER" id="PTHR11716">
    <property type="entry name" value="PHOSPHOLIPASE A2 FAMILY MEMBER"/>
    <property type="match status" value="1"/>
</dbReference>
<dbReference type="PANTHER" id="PTHR11716:SF9">
    <property type="entry name" value="PHOSPHOLIPASE A2, MEMBRANE ASSOCIATED"/>
    <property type="match status" value="1"/>
</dbReference>
<dbReference type="Pfam" id="PF00068">
    <property type="entry name" value="Phospholip_A2_1"/>
    <property type="match status" value="1"/>
</dbReference>
<dbReference type="PRINTS" id="PR00389">
    <property type="entry name" value="PHPHLIPASEA2"/>
</dbReference>
<dbReference type="SMART" id="SM00085">
    <property type="entry name" value="PA2c"/>
    <property type="match status" value="1"/>
</dbReference>
<dbReference type="SUPFAM" id="SSF48619">
    <property type="entry name" value="Phospholipase A2, PLA2"/>
    <property type="match status" value="1"/>
</dbReference>
<dbReference type="PROSITE" id="PS00119">
    <property type="entry name" value="PA2_ASP"/>
    <property type="match status" value="1"/>
</dbReference>
<dbReference type="PROSITE" id="PS00118">
    <property type="entry name" value="PA2_HIS"/>
    <property type="match status" value="1"/>
</dbReference>
<organism>
    <name type="scientific">Crotalus durissus terrificus</name>
    <name type="common">South American rattlesnake</name>
    <dbReference type="NCBI Taxonomy" id="8732"/>
    <lineage>
        <taxon>Eukaryota</taxon>
        <taxon>Metazoa</taxon>
        <taxon>Chordata</taxon>
        <taxon>Craniata</taxon>
        <taxon>Vertebrata</taxon>
        <taxon>Euteleostomi</taxon>
        <taxon>Lepidosauria</taxon>
        <taxon>Squamata</taxon>
        <taxon>Bifurcata</taxon>
        <taxon>Unidentata</taxon>
        <taxon>Episquamata</taxon>
        <taxon>Toxicofera</taxon>
        <taxon>Serpentes</taxon>
        <taxon>Colubroidea</taxon>
        <taxon>Viperidae</taxon>
        <taxon>Crotalinae</taxon>
        <taxon>Crotalus</taxon>
    </lineage>
</organism>
<name>PA2BD_CRODU</name>
<sequence>HLLQFNKMIKFETRKNAIPFYAFYGCYCGWGGRGRPKDATDRCCFVHDCCYGKLAKCNTKWDIYRYSLKSGYITCGKGTWCEEQICECDRVAAECLRRSLSTYKYGYMFYPDSRCRGPSETC</sequence>
<evidence type="ECO:0000250" key="1">
    <source>
        <dbReference type="UniProtKB" id="P62022"/>
    </source>
</evidence>
<evidence type="ECO:0000255" key="2">
    <source>
        <dbReference type="PROSITE-ProRule" id="PRU10035"/>
    </source>
</evidence>
<evidence type="ECO:0000255" key="3">
    <source>
        <dbReference type="PROSITE-ProRule" id="PRU10036"/>
    </source>
</evidence>
<evidence type="ECO:0000269" key="4">
    <source>
    </source>
</evidence>
<evidence type="ECO:0000269" key="5">
    <source>
    </source>
</evidence>
<evidence type="ECO:0000269" key="6">
    <source>
    </source>
</evidence>
<evidence type="ECO:0000269" key="7">
    <source>
    </source>
</evidence>
<evidence type="ECO:0000269" key="8">
    <source>
    </source>
</evidence>
<evidence type="ECO:0000303" key="9">
    <source>
    </source>
</evidence>
<evidence type="ECO:0000305" key="10"/>
<evidence type="ECO:0000305" key="11">
    <source>
    </source>
</evidence>
<evidence type="ECO:0007744" key="12">
    <source>
        <dbReference type="PDB" id="6TMY"/>
    </source>
</evidence>
<evidence type="ECO:0007829" key="13">
    <source>
        <dbReference type="PDB" id="6TMY"/>
    </source>
</evidence>
<comment type="function">
    <text evidence="1 5 8">Heterodimer CA-CB: Crotoxin is a potent presynaptic neurotoxin that possesses phospholipase A2 (PLA2) activity and exerts a lethal action by blocking neuromuscular transmission (PubMed:8513799). It consists of a non-covalent association of a basic and weakly toxic PLA2 subunit (CBa2, CBb, CBc, or CBd), with a small acidic, non-enzymatic and non-toxic subunit (CA1, CA2, CA3 or CA4) (PubMed:8513799). The complex acts by binding to a specific 48-kDa protein (R48) receptor located on presynaptic membranes, forming a transient ternary complex CA-CB-R48, followed by dissociation of the CA-CB complex and release of the CA subunit (PubMed:12657321). At equilibrium, only the CB subunits remain associated with the specific crotoxin receptor (PubMed:12657321). In addition to neurotoxicity, crotoxin has been found to exert myotoxicity, nephrotoxicity, and cardiovascular toxicity (By similarity). Moreover, anti-inflammatory, immunomodulatory, anti-tumor and analgesic effects of crotoxin have also been reported (By similarity).</text>
</comment>
<comment type="function">
    <text evidence="1 8">Monomer CBd: The basic subunit of crotoxin is a snake venom phospholipase A2 (PLA2) that exhibits weak neurotoxicity (10-fold less than the heterodimer) and very strong anticoagulant effects by binding to factor Xa (F10) and inhibiting the prothrombinase activity (By similarity). In addition, it shows the same effects described for the heterodimer and binds the nucleotide-binding domain (NBD1) of CFTR chloride channels and increases the channel current (By similarity). PLA2 catalyzes the calcium-dependent hydrolysis of the 2-acyl groups in 3-sn-phosphoglycerides (PubMed:8513799).</text>
</comment>
<comment type="catalytic activity">
    <reaction evidence="2 3 8">
        <text>a 1,2-diacyl-sn-glycero-3-phosphocholine + H2O = a 1-acyl-sn-glycero-3-phosphocholine + a fatty acid + H(+)</text>
        <dbReference type="Rhea" id="RHEA:15801"/>
        <dbReference type="ChEBI" id="CHEBI:15377"/>
        <dbReference type="ChEBI" id="CHEBI:15378"/>
        <dbReference type="ChEBI" id="CHEBI:28868"/>
        <dbReference type="ChEBI" id="CHEBI:57643"/>
        <dbReference type="ChEBI" id="CHEBI:58168"/>
        <dbReference type="EC" id="3.1.1.4"/>
    </reaction>
</comment>
<comment type="cofactor">
    <cofactor evidence="1">
        <name>Ca(2+)</name>
        <dbReference type="ChEBI" id="CHEBI:29108"/>
    </cofactor>
    <text evidence="1">Binds 1 Ca(2+) ion.</text>
</comment>
<comment type="biophysicochemical properties">
    <kinetics>
        <KM evidence="8">0.06 uM for 1-palmitoyl-2-(10-pyrenyldecanoyl)-sn-glycero-3-monomethyl phosphatidic acid (monomer CBd)</KM>
        <KM evidence="8">0.35 uM for 1-palmitoyl-2-(10-pyrenyldecanoyl)-sn-glycero-3-monomethyl phosphatidic acid (class 1 heterodimer CA2-CBd)</KM>
        <KM evidence="8">0.3 uM for 1-palmitoyl-2-(10-pyrenyldecanoyl)-sn-glycero-3-monomethyl phosphatidic acid (class 1 heterodimer CA3-CBd)</KM>
        <Vmax evidence="8">19.7 umol/min/mg enzyme (monomer CBd)</Vmax>
        <Vmax evidence="8">4.6 umol/min/mg enzyme (class 1 heterodimer CA2-CBd)</Vmax>
        <Vmax evidence="8">4.0 umol/min/mg enzyme (class 1 heterodimer CA3-CBd)</Vmax>
    </kinetics>
</comment>
<comment type="subunit">
    <text evidence="1 4 8">Heterodimer of one of the acidic (CA1, CA2, CA3 or CA4) and one of the basic (CBa1, CBa2, CBb, CBc or CBd) subunits; non-covalently linked (PubMed:8513799). The acidic subunit is non-toxic, without enzymatic activity and comprises 3 peptides that are cross-linked by 5 disulfide bridges (PubMed:8513799). The basic subunit is toxic, has phospholipase A2 activity and is composed of a single chain (PubMed:8513799). Multiple variants of each subunit give different crotoxin complexes that can be subdivided into 2 classes: (1) those of high toxicity, low PLA2 activity (CBb, CBc and CBd linked with high affinity to any CA) and high stability (K(d)=4.5 nM) and (2) those of moderate toxicity, high PLA2 activity (CBa2 linked with low affinity to any CA) and low stability (K(d)=25 nM) (PubMed:8513799). Interacts with crotoxin inhibitor from Crotalus serum (CICS); the interaction leads to dissociation of the CA-CB heterodimer and to inhibition of PLA2 activity of the CB subunit (PubMed:10903514). Interacts with human NBD1 domain of CFTR (By similarity).</text>
</comment>
<comment type="subcellular location">
    <subcellularLocation>
        <location evidence="6 7">Secreted</location>
    </subcellularLocation>
</comment>
<comment type="tissue specificity">
    <text evidence="11">Expressed by the venom gland.</text>
</comment>
<comment type="mass spectrometry"/>
<comment type="toxic dose">
    <text evidence="8">In monomer CBd, LD(50) is 480 ug/kg by intravenous injection into mice.</text>
</comment>
<comment type="toxic dose">
    <text evidence="4">In class 1 heterodimer CA2-CBd, LD(50) is 70 ug/kg by intravenous injection into mice.</text>
</comment>
<comment type="toxic dose">
    <text evidence="4">In class 1 heterodimer CA3-CBd, LD(50) is 90 ug/kg by intravenous injection into mice.</text>
</comment>
<comment type="miscellaneous">
    <text evidence="4">The crotoxin heterodimer is inhibited by the crotoxin inhibitor from Crotalus serum (CICS) (PubMed:10903514). CICS neutralizes the lethal potency of crotoxin and inhibits its PLA2 activity (PubMed:10903514). CICS only binds tightly to the CB subunit and induces the dissociation of the heterodimer (PubMed:10903514). Tested on the CA2-CBd heterodimer (PubMed:10903514).</text>
</comment>
<comment type="similarity">
    <text evidence="10">Belongs to the phospholipase A2 family. Group II subfamily. D49 sub-subfamily.</text>
</comment>
<proteinExistence type="evidence at protein level"/>
<keyword id="KW-0002">3D-structure</keyword>
<keyword id="KW-1203">Blood coagulation cascade inhibiting toxin</keyword>
<keyword id="KW-0106">Calcium</keyword>
<keyword id="KW-0903">Direct protein sequencing</keyword>
<keyword id="KW-1015">Disulfide bond</keyword>
<keyword id="KW-1199">Hemostasis impairing toxin</keyword>
<keyword id="KW-0378">Hydrolase</keyword>
<keyword id="KW-0872">Ion channel impairing toxin</keyword>
<keyword id="KW-0442">Lipid degradation</keyword>
<keyword id="KW-0443">Lipid metabolism</keyword>
<keyword id="KW-0479">Metal-binding</keyword>
<keyword id="KW-0528">Neurotoxin</keyword>
<keyword id="KW-0638">Presynaptic neurotoxin</keyword>
<keyword id="KW-0964">Secreted</keyword>
<keyword id="KW-0800">Toxin</keyword>
<accession>C0HM14</accession>
<protein>
    <recommendedName>
        <fullName evidence="9">Phospholipase A2 crotoxin basic subunit CBd</fullName>
        <shortName evidence="9">CTX subunit CBd</shortName>
        <shortName evidence="10">svPLA2</shortName>
        <ecNumber evidence="2 3 8">3.1.1.4</ecNumber>
    </recommendedName>
    <alternativeName>
        <fullName evidence="10">Phosphatidylcholine 2-acylhydrolase</fullName>
    </alternativeName>
</protein>